<organism>
    <name type="scientific">Pseudomonas fluorescens (strain SBW25)</name>
    <dbReference type="NCBI Taxonomy" id="216595"/>
    <lineage>
        <taxon>Bacteria</taxon>
        <taxon>Pseudomonadati</taxon>
        <taxon>Pseudomonadota</taxon>
        <taxon>Gammaproteobacteria</taxon>
        <taxon>Pseudomonadales</taxon>
        <taxon>Pseudomonadaceae</taxon>
        <taxon>Pseudomonas</taxon>
    </lineage>
</organism>
<proteinExistence type="inferred from homology"/>
<evidence type="ECO:0000255" key="1">
    <source>
        <dbReference type="HAMAP-Rule" id="MF_00017"/>
    </source>
</evidence>
<accession>C3JXP7</accession>
<keyword id="KW-0227">DNA damage</keyword>
<keyword id="KW-0233">DNA recombination</keyword>
<keyword id="KW-0234">DNA repair</keyword>
<keyword id="KW-0479">Metal-binding</keyword>
<keyword id="KW-0862">Zinc</keyword>
<keyword id="KW-0863">Zinc-finger</keyword>
<reference key="1">
    <citation type="journal article" date="2009" name="Genome Biol.">
        <title>Genomic and genetic analyses of diversity and plant interactions of Pseudomonas fluorescens.</title>
        <authorList>
            <person name="Silby M.W."/>
            <person name="Cerdeno-Tarraga A.M."/>
            <person name="Vernikos G.S."/>
            <person name="Giddens S.R."/>
            <person name="Jackson R.W."/>
            <person name="Preston G.M."/>
            <person name="Zhang X.-X."/>
            <person name="Moon C.D."/>
            <person name="Gehrig S.M."/>
            <person name="Godfrey S.A.C."/>
            <person name="Knight C.G."/>
            <person name="Malone J.G."/>
            <person name="Robinson Z."/>
            <person name="Spiers A.J."/>
            <person name="Harris S."/>
            <person name="Challis G.L."/>
            <person name="Yaxley A.M."/>
            <person name="Harris D."/>
            <person name="Seeger K."/>
            <person name="Murphy L."/>
            <person name="Rutter S."/>
            <person name="Squares R."/>
            <person name="Quail M.A."/>
            <person name="Saunders E."/>
            <person name="Mavromatis K."/>
            <person name="Brettin T.S."/>
            <person name="Bentley S.D."/>
            <person name="Hothersall J."/>
            <person name="Stephens E."/>
            <person name="Thomas C.M."/>
            <person name="Parkhill J."/>
            <person name="Levy S.B."/>
            <person name="Rainey P.B."/>
            <person name="Thomson N.R."/>
        </authorList>
    </citation>
    <scope>NUCLEOTIDE SEQUENCE [LARGE SCALE GENOMIC DNA]</scope>
    <source>
        <strain>SBW25</strain>
    </source>
</reference>
<name>RECR_PSEFS</name>
<dbReference type="EMBL" id="AM181176">
    <property type="protein sequence ID" value="CAY51305.1"/>
    <property type="molecule type" value="Genomic_DNA"/>
</dbReference>
<dbReference type="RefSeq" id="WP_015885312.1">
    <property type="nucleotide sequence ID" value="NC_012660.1"/>
</dbReference>
<dbReference type="SMR" id="C3JXP7"/>
<dbReference type="STRING" id="294.SRM1_01902"/>
<dbReference type="GeneID" id="93466161"/>
<dbReference type="eggNOG" id="COG0353">
    <property type="taxonomic scope" value="Bacteria"/>
</dbReference>
<dbReference type="HOGENOM" id="CLU_060739_1_2_6"/>
<dbReference type="OrthoDB" id="9802672at2"/>
<dbReference type="GO" id="GO:0003677">
    <property type="term" value="F:DNA binding"/>
    <property type="evidence" value="ECO:0007669"/>
    <property type="project" value="UniProtKB-UniRule"/>
</dbReference>
<dbReference type="GO" id="GO:0008270">
    <property type="term" value="F:zinc ion binding"/>
    <property type="evidence" value="ECO:0007669"/>
    <property type="project" value="UniProtKB-KW"/>
</dbReference>
<dbReference type="GO" id="GO:0006310">
    <property type="term" value="P:DNA recombination"/>
    <property type="evidence" value="ECO:0007669"/>
    <property type="project" value="UniProtKB-UniRule"/>
</dbReference>
<dbReference type="GO" id="GO:0006281">
    <property type="term" value="P:DNA repair"/>
    <property type="evidence" value="ECO:0007669"/>
    <property type="project" value="UniProtKB-UniRule"/>
</dbReference>
<dbReference type="CDD" id="cd01025">
    <property type="entry name" value="TOPRIM_recR"/>
    <property type="match status" value="1"/>
</dbReference>
<dbReference type="Gene3D" id="3.40.1360.10">
    <property type="match status" value="1"/>
</dbReference>
<dbReference type="Gene3D" id="6.10.250.240">
    <property type="match status" value="1"/>
</dbReference>
<dbReference type="Gene3D" id="1.10.8.420">
    <property type="entry name" value="RecR Domain 1"/>
    <property type="match status" value="1"/>
</dbReference>
<dbReference type="HAMAP" id="MF_00017">
    <property type="entry name" value="RecR"/>
    <property type="match status" value="1"/>
</dbReference>
<dbReference type="InterPro" id="IPR000093">
    <property type="entry name" value="DNA_Rcmb_RecR"/>
</dbReference>
<dbReference type="InterPro" id="IPR023627">
    <property type="entry name" value="Rcmb_RecR"/>
</dbReference>
<dbReference type="InterPro" id="IPR015967">
    <property type="entry name" value="Rcmb_RecR_Znf"/>
</dbReference>
<dbReference type="InterPro" id="IPR006171">
    <property type="entry name" value="TOPRIM_dom"/>
</dbReference>
<dbReference type="InterPro" id="IPR034137">
    <property type="entry name" value="TOPRIM_RecR"/>
</dbReference>
<dbReference type="NCBIfam" id="TIGR00615">
    <property type="entry name" value="recR"/>
    <property type="match status" value="1"/>
</dbReference>
<dbReference type="PANTHER" id="PTHR30446">
    <property type="entry name" value="RECOMBINATION PROTEIN RECR"/>
    <property type="match status" value="1"/>
</dbReference>
<dbReference type="PANTHER" id="PTHR30446:SF0">
    <property type="entry name" value="RECOMBINATION PROTEIN RECR"/>
    <property type="match status" value="1"/>
</dbReference>
<dbReference type="Pfam" id="PF21175">
    <property type="entry name" value="RecR_C"/>
    <property type="match status" value="1"/>
</dbReference>
<dbReference type="Pfam" id="PF21176">
    <property type="entry name" value="RecR_HhH"/>
    <property type="match status" value="1"/>
</dbReference>
<dbReference type="Pfam" id="PF02132">
    <property type="entry name" value="RecR_ZnF"/>
    <property type="match status" value="1"/>
</dbReference>
<dbReference type="Pfam" id="PF13662">
    <property type="entry name" value="Toprim_4"/>
    <property type="match status" value="1"/>
</dbReference>
<dbReference type="SMART" id="SM00493">
    <property type="entry name" value="TOPRIM"/>
    <property type="match status" value="1"/>
</dbReference>
<dbReference type="SUPFAM" id="SSF111304">
    <property type="entry name" value="Recombination protein RecR"/>
    <property type="match status" value="1"/>
</dbReference>
<dbReference type="PROSITE" id="PS01300">
    <property type="entry name" value="RECR"/>
    <property type="match status" value="1"/>
</dbReference>
<dbReference type="PROSITE" id="PS50880">
    <property type="entry name" value="TOPRIM"/>
    <property type="match status" value="1"/>
</dbReference>
<feature type="chain" id="PRO_1000201868" description="Recombination protein RecR">
    <location>
        <begin position="1"/>
        <end position="200"/>
    </location>
</feature>
<feature type="domain" description="Toprim" evidence="1">
    <location>
        <begin position="80"/>
        <end position="175"/>
    </location>
</feature>
<feature type="zinc finger region" description="C4-type" evidence="1">
    <location>
        <begin position="57"/>
        <end position="72"/>
    </location>
</feature>
<protein>
    <recommendedName>
        <fullName evidence="1">Recombination protein RecR</fullName>
    </recommendedName>
</protein>
<comment type="function">
    <text evidence="1">May play a role in DNA repair. It seems to be involved in an RecBC-independent recombinational process of DNA repair. It may act with RecF and RecO.</text>
</comment>
<comment type="similarity">
    <text evidence="1">Belongs to the RecR family.</text>
</comment>
<sequence>MSFSPLIRQLIDALRTLPGVGQKTAQRMALQLLERDRSGGTRLAQALSQAMTGVGHCRQCRTLTEEELCPQCADPRRDDTLLCVVEGPMDVYAVEQTGYRGRYFVLKGHLSPLDGLGPEAIGIPQLVARIEEQGTFTEVILATNPTVEGEATAHYIAQLLTNKGLITSRIAHGVPLGGELELVDGGTLAHSFAGRKPIAL</sequence>
<gene>
    <name evidence="1" type="primary">recR</name>
    <name type="ordered locus">PFLU_4575</name>
</gene>